<dbReference type="EMBL" id="CP001337">
    <property type="protein sequence ID" value="ACL24379.1"/>
    <property type="molecule type" value="Genomic_DNA"/>
</dbReference>
<dbReference type="RefSeq" id="WP_015940238.1">
    <property type="nucleotide sequence ID" value="NC_011831.1"/>
</dbReference>
<dbReference type="SMR" id="B8G989"/>
<dbReference type="STRING" id="326427.Cagg_1474"/>
<dbReference type="KEGG" id="cag:Cagg_1474"/>
<dbReference type="eggNOG" id="COG0244">
    <property type="taxonomic scope" value="Bacteria"/>
</dbReference>
<dbReference type="HOGENOM" id="CLU_092227_1_2_0"/>
<dbReference type="OrthoDB" id="9808307at2"/>
<dbReference type="Proteomes" id="UP000002508">
    <property type="component" value="Chromosome"/>
</dbReference>
<dbReference type="GO" id="GO:1990904">
    <property type="term" value="C:ribonucleoprotein complex"/>
    <property type="evidence" value="ECO:0007669"/>
    <property type="project" value="UniProtKB-KW"/>
</dbReference>
<dbReference type="GO" id="GO:0005840">
    <property type="term" value="C:ribosome"/>
    <property type="evidence" value="ECO:0007669"/>
    <property type="project" value="UniProtKB-KW"/>
</dbReference>
<dbReference type="GO" id="GO:0070180">
    <property type="term" value="F:large ribosomal subunit rRNA binding"/>
    <property type="evidence" value="ECO:0007669"/>
    <property type="project" value="UniProtKB-UniRule"/>
</dbReference>
<dbReference type="GO" id="GO:0006412">
    <property type="term" value="P:translation"/>
    <property type="evidence" value="ECO:0007669"/>
    <property type="project" value="UniProtKB-UniRule"/>
</dbReference>
<dbReference type="CDD" id="cd05797">
    <property type="entry name" value="Ribosomal_L10"/>
    <property type="match status" value="1"/>
</dbReference>
<dbReference type="Gene3D" id="3.30.70.1730">
    <property type="match status" value="1"/>
</dbReference>
<dbReference type="Gene3D" id="6.10.250.290">
    <property type="match status" value="1"/>
</dbReference>
<dbReference type="HAMAP" id="MF_00362">
    <property type="entry name" value="Ribosomal_uL10"/>
    <property type="match status" value="1"/>
</dbReference>
<dbReference type="InterPro" id="IPR001790">
    <property type="entry name" value="Ribosomal_uL10"/>
</dbReference>
<dbReference type="InterPro" id="IPR043141">
    <property type="entry name" value="Ribosomal_uL10-like_sf"/>
</dbReference>
<dbReference type="InterPro" id="IPR022973">
    <property type="entry name" value="Ribosomal_uL10_bac"/>
</dbReference>
<dbReference type="InterPro" id="IPR047865">
    <property type="entry name" value="Ribosomal_uL10_bac_type"/>
</dbReference>
<dbReference type="NCBIfam" id="NF000955">
    <property type="entry name" value="PRK00099.1-1"/>
    <property type="match status" value="1"/>
</dbReference>
<dbReference type="PANTHER" id="PTHR11560">
    <property type="entry name" value="39S RIBOSOMAL PROTEIN L10, MITOCHONDRIAL"/>
    <property type="match status" value="1"/>
</dbReference>
<dbReference type="Pfam" id="PF00466">
    <property type="entry name" value="Ribosomal_L10"/>
    <property type="match status" value="1"/>
</dbReference>
<dbReference type="SUPFAM" id="SSF160369">
    <property type="entry name" value="Ribosomal protein L10-like"/>
    <property type="match status" value="1"/>
</dbReference>
<feature type="chain" id="PRO_1000195537" description="Large ribosomal subunit protein uL10">
    <location>
        <begin position="1"/>
        <end position="181"/>
    </location>
</feature>
<reference key="1">
    <citation type="submission" date="2008-12" db="EMBL/GenBank/DDBJ databases">
        <title>Complete sequence of Chloroflexus aggregans DSM 9485.</title>
        <authorList>
            <consortium name="US DOE Joint Genome Institute"/>
            <person name="Lucas S."/>
            <person name="Copeland A."/>
            <person name="Lapidus A."/>
            <person name="Glavina del Rio T."/>
            <person name="Dalin E."/>
            <person name="Tice H."/>
            <person name="Pitluck S."/>
            <person name="Foster B."/>
            <person name="Larimer F."/>
            <person name="Land M."/>
            <person name="Hauser L."/>
            <person name="Kyrpides N."/>
            <person name="Mikhailova N."/>
            <person name="Bryant D.A."/>
            <person name="Richardson P."/>
        </authorList>
    </citation>
    <scope>NUCLEOTIDE SEQUENCE [LARGE SCALE GENOMIC DNA]</scope>
    <source>
        <strain>MD-66 / DSM 9485</strain>
    </source>
</reference>
<organism>
    <name type="scientific">Chloroflexus aggregans (strain MD-66 / DSM 9485)</name>
    <dbReference type="NCBI Taxonomy" id="326427"/>
    <lineage>
        <taxon>Bacteria</taxon>
        <taxon>Bacillati</taxon>
        <taxon>Chloroflexota</taxon>
        <taxon>Chloroflexia</taxon>
        <taxon>Chloroflexales</taxon>
        <taxon>Chloroflexineae</taxon>
        <taxon>Chloroflexaceae</taxon>
        <taxon>Chloroflexus</taxon>
    </lineage>
</organism>
<sequence>MPTQRKIETVQELTEKLSRAQLVVVADYRGEGRGMSVADMTELRRKLREHGGEVVVAKNTLLKIAANHTGRGALDPLLAGPTAVTFAYDDVAKVAKALLDYLKSGNKSFTVRGALLGQALLPADALEQVTKLPSREQALAQVVGGIAAPVSGVVGVLNAAISNVLYVLQARIDQLQPQSSS</sequence>
<gene>
    <name evidence="1" type="primary">rplJ</name>
    <name type="ordered locus">Cagg_1474</name>
</gene>
<proteinExistence type="inferred from homology"/>
<name>RL10_CHLAD</name>
<accession>B8G989</accession>
<keyword id="KW-0687">Ribonucleoprotein</keyword>
<keyword id="KW-0689">Ribosomal protein</keyword>
<keyword id="KW-0694">RNA-binding</keyword>
<keyword id="KW-0699">rRNA-binding</keyword>
<comment type="function">
    <text evidence="1">Forms part of the ribosomal stalk, playing a central role in the interaction of the ribosome with GTP-bound translation factors.</text>
</comment>
<comment type="subunit">
    <text evidence="1">Part of the ribosomal stalk of the 50S ribosomal subunit. The N-terminus interacts with L11 and the large rRNA to form the base of the stalk. The C-terminus forms an elongated spine to which L12 dimers bind in a sequential fashion forming a multimeric L10(L12)X complex.</text>
</comment>
<comment type="similarity">
    <text evidence="1">Belongs to the universal ribosomal protein uL10 family.</text>
</comment>
<protein>
    <recommendedName>
        <fullName evidence="1">Large ribosomal subunit protein uL10</fullName>
    </recommendedName>
    <alternativeName>
        <fullName evidence="2">50S ribosomal protein L10</fullName>
    </alternativeName>
</protein>
<evidence type="ECO:0000255" key="1">
    <source>
        <dbReference type="HAMAP-Rule" id="MF_00362"/>
    </source>
</evidence>
<evidence type="ECO:0000305" key="2"/>